<name>SYVM2_ARATH</name>
<proteinExistence type="inferred from homology"/>
<dbReference type="EC" id="6.1.1.9" evidence="5"/>
<dbReference type="EMBL" id="AL391147">
    <property type="protein sequence ID" value="CAC01835.1"/>
    <property type="status" value="ALT_SEQ"/>
    <property type="molecule type" value="Genomic_DNA"/>
</dbReference>
<dbReference type="EMBL" id="CP002688">
    <property type="protein sequence ID" value="AED92329.1"/>
    <property type="molecule type" value="Genomic_DNA"/>
</dbReference>
<dbReference type="RefSeq" id="NP_568337.4">
    <property type="nucleotide sequence ID" value="NM_121677.6"/>
</dbReference>
<dbReference type="SMR" id="F4KE63"/>
<dbReference type="FunCoup" id="F4KE63">
    <property type="interactions" value="734"/>
</dbReference>
<dbReference type="STRING" id="3702.F4KE63"/>
<dbReference type="iPTMnet" id="F4KE63"/>
<dbReference type="PaxDb" id="3702-AT5G16715.1"/>
<dbReference type="ProteomicsDB" id="245291"/>
<dbReference type="EnsemblPlants" id="AT5G16715.1">
    <property type="protein sequence ID" value="AT5G16715.1"/>
    <property type="gene ID" value="AT5G16715"/>
</dbReference>
<dbReference type="GeneID" id="831533"/>
<dbReference type="Gramene" id="AT5G16715.1">
    <property type="protein sequence ID" value="AT5G16715.1"/>
    <property type="gene ID" value="AT5G16715"/>
</dbReference>
<dbReference type="KEGG" id="ath:AT5G16715"/>
<dbReference type="Araport" id="AT5G16715"/>
<dbReference type="TAIR" id="AT5G16715">
    <property type="gene designation" value="EMB2247"/>
</dbReference>
<dbReference type="eggNOG" id="KOG0432">
    <property type="taxonomic scope" value="Eukaryota"/>
</dbReference>
<dbReference type="HOGENOM" id="CLU_001493_0_2_1"/>
<dbReference type="InParanoid" id="F4KE63"/>
<dbReference type="OMA" id="RQWYIRN"/>
<dbReference type="PRO" id="PR:F4KE63"/>
<dbReference type="Proteomes" id="UP000006548">
    <property type="component" value="Chromosome 5"/>
</dbReference>
<dbReference type="ExpressionAtlas" id="F4KE63">
    <property type="expression patterns" value="baseline and differential"/>
</dbReference>
<dbReference type="GO" id="GO:0009507">
    <property type="term" value="C:chloroplast"/>
    <property type="evidence" value="ECO:0007005"/>
    <property type="project" value="TAIR"/>
</dbReference>
<dbReference type="GO" id="GO:0009570">
    <property type="term" value="C:chloroplast stroma"/>
    <property type="evidence" value="ECO:0007005"/>
    <property type="project" value="TAIR"/>
</dbReference>
<dbReference type="GO" id="GO:0005739">
    <property type="term" value="C:mitochondrion"/>
    <property type="evidence" value="ECO:0007669"/>
    <property type="project" value="UniProtKB-SubCell"/>
</dbReference>
<dbReference type="GO" id="GO:0002161">
    <property type="term" value="F:aminoacyl-tRNA deacylase activity"/>
    <property type="evidence" value="ECO:0007669"/>
    <property type="project" value="InterPro"/>
</dbReference>
<dbReference type="GO" id="GO:0005524">
    <property type="term" value="F:ATP binding"/>
    <property type="evidence" value="ECO:0007669"/>
    <property type="project" value="UniProtKB-KW"/>
</dbReference>
<dbReference type="GO" id="GO:0004832">
    <property type="term" value="F:valine-tRNA ligase activity"/>
    <property type="evidence" value="ECO:0007669"/>
    <property type="project" value="UniProtKB-EC"/>
</dbReference>
<dbReference type="GO" id="GO:0009793">
    <property type="term" value="P:embryo development ending in seed dormancy"/>
    <property type="evidence" value="ECO:0000315"/>
    <property type="project" value="TAIR"/>
</dbReference>
<dbReference type="GO" id="GO:0006438">
    <property type="term" value="P:valyl-tRNA aminoacylation"/>
    <property type="evidence" value="ECO:0007669"/>
    <property type="project" value="InterPro"/>
</dbReference>
<dbReference type="CDD" id="cd07962">
    <property type="entry name" value="Anticodon_Ia_Val"/>
    <property type="match status" value="1"/>
</dbReference>
<dbReference type="CDD" id="cd00817">
    <property type="entry name" value="ValRS_core"/>
    <property type="match status" value="1"/>
</dbReference>
<dbReference type="FunFam" id="1.10.287.380:FF:000001">
    <property type="entry name" value="Valine--tRNA ligase"/>
    <property type="match status" value="1"/>
</dbReference>
<dbReference type="FunFam" id="1.10.730.10:FF:000014">
    <property type="entry name" value="Valine--tRNA ligase"/>
    <property type="match status" value="1"/>
</dbReference>
<dbReference type="FunFam" id="3.40.50.620:FF:000126">
    <property type="entry name" value="Valine--tRNA ligase chloroplastic/mitochondrial 2"/>
    <property type="match status" value="1"/>
</dbReference>
<dbReference type="FunFam" id="3.40.50.620:FF:000020">
    <property type="entry name" value="Valine--tRNA ligase, mitochondrial"/>
    <property type="match status" value="1"/>
</dbReference>
<dbReference type="Gene3D" id="3.40.50.620">
    <property type="entry name" value="HUPs"/>
    <property type="match status" value="2"/>
</dbReference>
<dbReference type="Gene3D" id="1.10.730.10">
    <property type="entry name" value="Isoleucyl-tRNA Synthetase, Domain 1"/>
    <property type="match status" value="1"/>
</dbReference>
<dbReference type="Gene3D" id="1.10.287.380">
    <property type="entry name" value="Valyl-tRNA synthetase, C-terminal domain"/>
    <property type="match status" value="1"/>
</dbReference>
<dbReference type="Gene3D" id="3.90.740.10">
    <property type="entry name" value="Valyl/Leucyl/Isoleucyl-tRNA synthetase, editing domain"/>
    <property type="match status" value="2"/>
</dbReference>
<dbReference type="HAMAP" id="MF_02004">
    <property type="entry name" value="Val_tRNA_synth_type1"/>
    <property type="match status" value="1"/>
</dbReference>
<dbReference type="InterPro" id="IPR001412">
    <property type="entry name" value="aa-tRNA-synth_I_CS"/>
</dbReference>
<dbReference type="InterPro" id="IPR002300">
    <property type="entry name" value="aa-tRNA-synth_Ia"/>
</dbReference>
<dbReference type="InterPro" id="IPR033705">
    <property type="entry name" value="Anticodon_Ia_Val"/>
</dbReference>
<dbReference type="InterPro" id="IPR013155">
    <property type="entry name" value="M/V/L/I-tRNA-synth_anticd-bd"/>
</dbReference>
<dbReference type="InterPro" id="IPR014729">
    <property type="entry name" value="Rossmann-like_a/b/a_fold"/>
</dbReference>
<dbReference type="InterPro" id="IPR010978">
    <property type="entry name" value="tRNA-bd_arm"/>
</dbReference>
<dbReference type="InterPro" id="IPR009080">
    <property type="entry name" value="tRNAsynth_Ia_anticodon-bd"/>
</dbReference>
<dbReference type="InterPro" id="IPR037118">
    <property type="entry name" value="Val-tRNA_synth_C_sf"/>
</dbReference>
<dbReference type="InterPro" id="IPR019499">
    <property type="entry name" value="Val-tRNA_synth_tRNA-bd"/>
</dbReference>
<dbReference type="InterPro" id="IPR009008">
    <property type="entry name" value="Val/Leu/Ile-tRNA-synth_edit"/>
</dbReference>
<dbReference type="InterPro" id="IPR002303">
    <property type="entry name" value="Valyl-tRNA_ligase"/>
</dbReference>
<dbReference type="NCBIfam" id="NF004349">
    <property type="entry name" value="PRK05729.1"/>
    <property type="match status" value="1"/>
</dbReference>
<dbReference type="NCBIfam" id="TIGR00422">
    <property type="entry name" value="valS"/>
    <property type="match status" value="1"/>
</dbReference>
<dbReference type="PANTHER" id="PTHR11946:SF93">
    <property type="entry name" value="VALINE--TRNA LIGASE, CHLOROPLASTIC_MITOCHONDRIAL 2"/>
    <property type="match status" value="1"/>
</dbReference>
<dbReference type="PANTHER" id="PTHR11946">
    <property type="entry name" value="VALYL-TRNA SYNTHETASES"/>
    <property type="match status" value="1"/>
</dbReference>
<dbReference type="Pfam" id="PF08264">
    <property type="entry name" value="Anticodon_1"/>
    <property type="match status" value="1"/>
</dbReference>
<dbReference type="Pfam" id="PF00133">
    <property type="entry name" value="tRNA-synt_1"/>
    <property type="match status" value="1"/>
</dbReference>
<dbReference type="Pfam" id="PF10458">
    <property type="entry name" value="Val_tRNA-synt_C"/>
    <property type="match status" value="1"/>
</dbReference>
<dbReference type="PRINTS" id="PR00986">
    <property type="entry name" value="TRNASYNTHVAL"/>
</dbReference>
<dbReference type="SUPFAM" id="SSF47323">
    <property type="entry name" value="Anticodon-binding domain of a subclass of class I aminoacyl-tRNA synthetases"/>
    <property type="match status" value="1"/>
</dbReference>
<dbReference type="SUPFAM" id="SSF52374">
    <property type="entry name" value="Nucleotidylyl transferase"/>
    <property type="match status" value="1"/>
</dbReference>
<dbReference type="SUPFAM" id="SSF46589">
    <property type="entry name" value="tRNA-binding arm"/>
    <property type="match status" value="1"/>
</dbReference>
<dbReference type="SUPFAM" id="SSF50677">
    <property type="entry name" value="ValRS/IleRS/LeuRS editing domain"/>
    <property type="match status" value="1"/>
</dbReference>
<dbReference type="PROSITE" id="PS00178">
    <property type="entry name" value="AA_TRNA_LIGASE_I"/>
    <property type="match status" value="1"/>
</dbReference>
<keyword id="KW-0030">Aminoacyl-tRNA synthetase</keyword>
<keyword id="KW-0067">ATP-binding</keyword>
<keyword id="KW-0150">Chloroplast</keyword>
<keyword id="KW-0175">Coiled coil</keyword>
<keyword id="KW-0433">Leucine-rich repeat</keyword>
<keyword id="KW-0436">Ligase</keyword>
<keyword id="KW-0496">Mitochondrion</keyword>
<keyword id="KW-0547">Nucleotide-binding</keyword>
<keyword id="KW-0934">Plastid</keyword>
<keyword id="KW-0648">Protein biosynthesis</keyword>
<keyword id="KW-1185">Reference proteome</keyword>
<keyword id="KW-0677">Repeat</keyword>
<keyword id="KW-0809">Transit peptide</keyword>
<evidence type="ECO:0000250" key="1"/>
<evidence type="ECO:0000255" key="2"/>
<evidence type="ECO:0000269" key="3">
    <source>
    </source>
</evidence>
<evidence type="ECO:0000303" key="4">
    <source>
    </source>
</evidence>
<evidence type="ECO:0000305" key="5"/>
<evidence type="ECO:0000305" key="6">
    <source>
    </source>
</evidence>
<evidence type="ECO:0000312" key="7">
    <source>
        <dbReference type="Araport" id="AT5G16715"/>
    </source>
</evidence>
<comment type="catalytic activity">
    <reaction evidence="5">
        <text>tRNA(Val) + L-valine + ATP = L-valyl-tRNA(Val) + AMP + diphosphate</text>
        <dbReference type="Rhea" id="RHEA:10704"/>
        <dbReference type="Rhea" id="RHEA-COMP:9672"/>
        <dbReference type="Rhea" id="RHEA-COMP:9708"/>
        <dbReference type="ChEBI" id="CHEBI:30616"/>
        <dbReference type="ChEBI" id="CHEBI:33019"/>
        <dbReference type="ChEBI" id="CHEBI:57762"/>
        <dbReference type="ChEBI" id="CHEBI:78442"/>
        <dbReference type="ChEBI" id="CHEBI:78537"/>
        <dbReference type="ChEBI" id="CHEBI:456215"/>
        <dbReference type="EC" id="6.1.1.9"/>
    </reaction>
</comment>
<comment type="subcellular location">
    <subcellularLocation>
        <location evidence="3">Plastid</location>
        <location evidence="3">Chloroplast</location>
    </subcellularLocation>
    <subcellularLocation>
        <location evidence="3">Mitochondrion</location>
    </subcellularLocation>
</comment>
<comment type="disruption phenotype">
    <text evidence="6">Embryo defective. Developmental arrest of the embryo at the globular stage.</text>
</comment>
<comment type="similarity">
    <text evidence="5">Belongs to the class-I aminoacyl-tRNA synthetase family.</text>
</comment>
<comment type="sequence caution" evidence="5">
    <conflict type="erroneous gene model prediction">
        <sequence resource="EMBL-CDS" id="CAC01835"/>
    </conflict>
    <text>The predicted gene has been split into 2 genes: At5g16710 and At5g16715.</text>
</comment>
<organism>
    <name type="scientific">Arabidopsis thaliana</name>
    <name type="common">Mouse-ear cress</name>
    <dbReference type="NCBI Taxonomy" id="3702"/>
    <lineage>
        <taxon>Eukaryota</taxon>
        <taxon>Viridiplantae</taxon>
        <taxon>Streptophyta</taxon>
        <taxon>Embryophyta</taxon>
        <taxon>Tracheophyta</taxon>
        <taxon>Spermatophyta</taxon>
        <taxon>Magnoliopsida</taxon>
        <taxon>eudicotyledons</taxon>
        <taxon>Gunneridae</taxon>
        <taxon>Pentapetalae</taxon>
        <taxon>rosids</taxon>
        <taxon>malvids</taxon>
        <taxon>Brassicales</taxon>
        <taxon>Brassicaceae</taxon>
        <taxon>Camelineae</taxon>
        <taxon>Arabidopsis</taxon>
    </lineage>
</organism>
<gene>
    <name evidence="4" type="primary">EMB2247</name>
    <name evidence="7" type="ordered locus">At5g16715</name>
</gene>
<sequence length="974" mass="110629">MILKTAFSLPTPTTTLLSPSSPHQLNTLFFTRRRRRLISPSRLNSIFSQRRFSFSAAASGNNVFTSPETSKTFDFSSEEKIYKWWESQGYFKPNFDQGGSPFVIPMPPPNVTGSLHMGHAMFVTLEDIMVRYNRMNGRPTLWLPGTDHAGIATQLVVEKMLASEGIKRVDLGRDEFTKRVWEWKEKYGGTITNQIKRLGASCDWSRERFTLDEQLSRAVVEAFVKLHDKGLIYQGSYMVNWSPNLQTAVSDLEVEYSEEPGFLYHIKYRVAGSPDFLTIATTRPETLFGDVALAVHPEDDRYSKYVGQTAIVPMTYGRHVPIIADKYVDKDFGTGVLKISPGHDHNDYLLARKLGLPILNVMNKDATLNDVAGLFCGLDRFEVREKLWADLEEIGLAVKKEPHTLRVPRSQRGGEVIEPLVSKQWFVHMDPLAEKALLAVENKELTIIPERFEKIYNHWLTNIKDWCISRQLWWGHRIPVWYVVGKDCEEDYIVAKSAEEALEKALEKYGKDVEIYQDPDVLDTWFSSSLWPFSTLGWPDVAAKDFNNFYPTNMLETGHDILFFWVARMVMMGIEFTGTVPFSHVYLHGLIRDSQGRKMSKSLGNVIDPLDTIKDFGTDALRFTIALGTAGQDLNLSTERLTANKAFTNKLWNAGKFVLHSLPSLSDTSAWENLLDLKLDKEETLLSLPLPECWAVSKLHILIDSVTASYEKLFFGDVGRETYDFFWSDFADWYIEASKSRLYGSGGNSVSLASQAVLLYVFENILKLLHPFMPFVTEDLWQALPYRKEALIVSPWPQNSLPRNVESIKRFENLQALTRAIRNARAEYSVEPVKRISASVVGSAEVIEYISKEKEVLALLSRLDLNNVHFSNAPPGDANLSVHLVASEGLEAYLPLAAMVDISSEVQRISKRLSKMQTEYDALITRLSSPKFVEKAPEEVVRGVKEQVEELEEKIKLTKARLDFLKSTTSLVSQ</sequence>
<accession>F4KE63</accession>
<feature type="transit peptide" description="Chloroplast and mitochondrion" evidence="5">
    <location>
        <begin position="1"/>
        <end status="unknown"/>
    </location>
</feature>
<feature type="chain" id="PRO_0000433550" description="Valine--tRNA ligase, chloroplastic/mitochondrial 2" evidence="5">
    <location>
        <begin status="unknown"/>
        <end position="974"/>
    </location>
</feature>
<feature type="repeat" description="LRR 1" evidence="2">
    <location>
        <begin position="432"/>
        <end position="454"/>
    </location>
</feature>
<feature type="repeat" description="LRR 2" evidence="2">
    <location>
        <begin position="857"/>
        <end position="880"/>
    </location>
</feature>
<feature type="coiled-coil region" evidence="2">
    <location>
        <begin position="489"/>
        <end position="518"/>
    </location>
</feature>
<feature type="short sequence motif" description="'HIGH' region" evidence="5">
    <location>
        <begin position="109"/>
        <end position="119"/>
    </location>
</feature>
<feature type="short sequence motif" description="'KMSKS' region" evidence="5">
    <location>
        <begin position="598"/>
        <end position="602"/>
    </location>
</feature>
<feature type="binding site" evidence="1">
    <location>
        <position position="601"/>
    </location>
    <ligand>
        <name>ATP</name>
        <dbReference type="ChEBI" id="CHEBI:30616"/>
    </ligand>
</feature>
<protein>
    <recommendedName>
        <fullName evidence="5">Valine--tRNA ligase, chloroplastic/mitochondrial 2</fullName>
        <ecNumber evidence="5">6.1.1.9</ecNumber>
    </recommendedName>
    <alternativeName>
        <fullName evidence="4">Protein EMBRYO DEFECTIVE 2247</fullName>
    </alternativeName>
    <alternativeName>
        <fullName evidence="5">Valyl-tRNA synthetase</fullName>
        <shortName evidence="5">ValRS</shortName>
    </alternativeName>
</protein>
<reference key="1">
    <citation type="journal article" date="2000" name="Nature">
        <title>Sequence and analysis of chromosome 5 of the plant Arabidopsis thaliana.</title>
        <authorList>
            <person name="Tabata S."/>
            <person name="Kaneko T."/>
            <person name="Nakamura Y."/>
            <person name="Kotani H."/>
            <person name="Kato T."/>
            <person name="Asamizu E."/>
            <person name="Miyajima N."/>
            <person name="Sasamoto S."/>
            <person name="Kimura T."/>
            <person name="Hosouchi T."/>
            <person name="Kawashima K."/>
            <person name="Kohara M."/>
            <person name="Matsumoto M."/>
            <person name="Matsuno A."/>
            <person name="Muraki A."/>
            <person name="Nakayama S."/>
            <person name="Nakazaki N."/>
            <person name="Naruo K."/>
            <person name="Okumura S."/>
            <person name="Shinpo S."/>
            <person name="Takeuchi C."/>
            <person name="Wada T."/>
            <person name="Watanabe A."/>
            <person name="Yamada M."/>
            <person name="Yasuda M."/>
            <person name="Sato S."/>
            <person name="de la Bastide M."/>
            <person name="Huang E."/>
            <person name="Spiegel L."/>
            <person name="Gnoj L."/>
            <person name="O'Shaughnessy A."/>
            <person name="Preston R."/>
            <person name="Habermann K."/>
            <person name="Murray J."/>
            <person name="Johnson D."/>
            <person name="Rohlfing T."/>
            <person name="Nelson J."/>
            <person name="Stoneking T."/>
            <person name="Pepin K."/>
            <person name="Spieth J."/>
            <person name="Sekhon M."/>
            <person name="Armstrong J."/>
            <person name="Becker M."/>
            <person name="Belter E."/>
            <person name="Cordum H."/>
            <person name="Cordes M."/>
            <person name="Courtney L."/>
            <person name="Courtney W."/>
            <person name="Dante M."/>
            <person name="Du H."/>
            <person name="Edwards J."/>
            <person name="Fryman J."/>
            <person name="Haakensen B."/>
            <person name="Lamar E."/>
            <person name="Latreille P."/>
            <person name="Leonard S."/>
            <person name="Meyer R."/>
            <person name="Mulvaney E."/>
            <person name="Ozersky P."/>
            <person name="Riley A."/>
            <person name="Strowmatt C."/>
            <person name="Wagner-McPherson C."/>
            <person name="Wollam A."/>
            <person name="Yoakum M."/>
            <person name="Bell M."/>
            <person name="Dedhia N."/>
            <person name="Parnell L."/>
            <person name="Shah R."/>
            <person name="Rodriguez M."/>
            <person name="Hoon See L."/>
            <person name="Vil D."/>
            <person name="Baker J."/>
            <person name="Kirchoff K."/>
            <person name="Toth K."/>
            <person name="King L."/>
            <person name="Bahret A."/>
            <person name="Miller B."/>
            <person name="Marra M.A."/>
            <person name="Martienssen R."/>
            <person name="McCombie W.R."/>
            <person name="Wilson R.K."/>
            <person name="Murphy G."/>
            <person name="Bancroft I."/>
            <person name="Volckaert G."/>
            <person name="Wambutt R."/>
            <person name="Duesterhoeft A."/>
            <person name="Stiekema W."/>
            <person name="Pohl T."/>
            <person name="Entian K.-D."/>
            <person name="Terryn N."/>
            <person name="Hartley N."/>
            <person name="Bent E."/>
            <person name="Johnson S."/>
            <person name="Langham S.-A."/>
            <person name="McCullagh B."/>
            <person name="Robben J."/>
            <person name="Grymonprez B."/>
            <person name="Zimmermann W."/>
            <person name="Ramsperger U."/>
            <person name="Wedler H."/>
            <person name="Balke K."/>
            <person name="Wedler E."/>
            <person name="Peters S."/>
            <person name="van Staveren M."/>
            <person name="Dirkse W."/>
            <person name="Mooijman P."/>
            <person name="Klein Lankhorst R."/>
            <person name="Weitzenegger T."/>
            <person name="Bothe G."/>
            <person name="Rose M."/>
            <person name="Hauf J."/>
            <person name="Berneiser S."/>
            <person name="Hempel S."/>
            <person name="Feldpausch M."/>
            <person name="Lamberth S."/>
            <person name="Villarroel R."/>
            <person name="Gielen J."/>
            <person name="Ardiles W."/>
            <person name="Bents O."/>
            <person name="Lemcke K."/>
            <person name="Kolesov G."/>
            <person name="Mayer K.F.X."/>
            <person name="Rudd S."/>
            <person name="Schoof H."/>
            <person name="Schueller C."/>
            <person name="Zaccaria P."/>
            <person name="Mewes H.-W."/>
            <person name="Bevan M."/>
            <person name="Fransz P.F."/>
        </authorList>
    </citation>
    <scope>NUCLEOTIDE SEQUENCE [LARGE SCALE GENOMIC DNA]</scope>
    <source>
        <strain>cv. Columbia</strain>
    </source>
</reference>
<reference key="2">
    <citation type="journal article" date="2017" name="Plant J.">
        <title>Araport11: a complete reannotation of the Arabidopsis thaliana reference genome.</title>
        <authorList>
            <person name="Cheng C.Y."/>
            <person name="Krishnakumar V."/>
            <person name="Chan A.P."/>
            <person name="Thibaud-Nissen F."/>
            <person name="Schobel S."/>
            <person name="Town C.D."/>
        </authorList>
    </citation>
    <scope>GENOME REANNOTATION</scope>
    <source>
        <strain>cv. Columbia</strain>
    </source>
</reference>
<reference key="3">
    <citation type="journal article" date="2005" name="Plant J.">
        <title>Requirement of aminoacyl-tRNA synthetases for gametogenesis and embryo development in Arabidopsis.</title>
        <authorList>
            <person name="Berg M."/>
            <person name="Rogers R."/>
            <person name="Muralla R."/>
            <person name="Meinke D."/>
        </authorList>
    </citation>
    <scope>DISRUPTION PHENOTYPE</scope>
</reference>
<reference key="4">
    <citation type="journal article" date="2005" name="Proc. Natl. Acad. Sci. U.S.A.">
        <title>Dual targeting is the rule for organellar aminoacyl-tRNA synthetases in Arabidopsis thaliana.</title>
        <authorList>
            <person name="Duchene A.-M."/>
            <person name="Giritch A."/>
            <person name="Hoffmann B."/>
            <person name="Cognat V."/>
            <person name="Lancelin D."/>
            <person name="Peeters N.M."/>
            <person name="Zaepfel M."/>
            <person name="Marechal-Drouard L."/>
            <person name="Small I.D."/>
        </authorList>
    </citation>
    <scope>SUBCELLULAR LOCATION</scope>
</reference>